<keyword id="KW-1003">Cell membrane</keyword>
<keyword id="KW-0449">Lipoprotein</keyword>
<keyword id="KW-0472">Membrane</keyword>
<keyword id="KW-0564">Palmitate</keyword>
<keyword id="KW-0614">Plasmid</keyword>
<keyword id="KW-1185">Reference proteome</keyword>
<keyword id="KW-0732">Signal</keyword>
<reference key="1">
    <citation type="journal article" date="1997" name="Nature">
        <title>Genomic sequence of a Lyme disease spirochaete, Borrelia burgdorferi.</title>
        <authorList>
            <person name="Fraser C.M."/>
            <person name="Casjens S."/>
            <person name="Huang W.M."/>
            <person name="Sutton G.G."/>
            <person name="Clayton R.A."/>
            <person name="Lathigra R."/>
            <person name="White O."/>
            <person name="Ketchum K.A."/>
            <person name="Dodson R.J."/>
            <person name="Hickey E.K."/>
            <person name="Gwinn M.L."/>
            <person name="Dougherty B.A."/>
            <person name="Tomb J.-F."/>
            <person name="Fleischmann R.D."/>
            <person name="Richardson D.L."/>
            <person name="Peterson J.D."/>
            <person name="Kerlavage A.R."/>
            <person name="Quackenbush J."/>
            <person name="Salzberg S.L."/>
            <person name="Hanson M."/>
            <person name="van Vugt R."/>
            <person name="Palmer N."/>
            <person name="Adams M.D."/>
            <person name="Gocayne J.D."/>
            <person name="Weidman J.F."/>
            <person name="Utterback T.R."/>
            <person name="Watthey L."/>
            <person name="McDonald L.A."/>
            <person name="Artiach P."/>
            <person name="Bowman C."/>
            <person name="Garland S.A."/>
            <person name="Fujii C."/>
            <person name="Cotton M.D."/>
            <person name="Horst K."/>
            <person name="Roberts K.M."/>
            <person name="Hatch B."/>
            <person name="Smith H.O."/>
            <person name="Venter J.C."/>
        </authorList>
    </citation>
    <scope>NUCLEOTIDE SEQUENCE [LARGE SCALE GENOMIC DNA]</scope>
    <source>
        <strain>ATCC 35210 / DSM 4680 / CIP 102532 / B31</strain>
    </source>
</reference>
<gene>
    <name type="ordered locus">BB_F20</name>
</gene>
<comment type="subcellular location">
    <subcellularLocation>
        <location evidence="1">Cell membrane</location>
        <topology evidence="1">Lipid-anchor</topology>
    </subcellularLocation>
</comment>
<comment type="similarity">
    <text evidence="2">To B.burgdorferi BBD15.</text>
</comment>
<comment type="sequence caution" evidence="2">
    <conflict type="erroneous initiation">
        <sequence resource="EMBL-CDS" id="AAC66376"/>
    </conflict>
    <text>Truncated N-terminus.</text>
</comment>
<organism>
    <name type="scientific">Borreliella burgdorferi (strain ATCC 35210 / DSM 4680 / CIP 102532 / B31)</name>
    <name type="common">Borrelia burgdorferi</name>
    <dbReference type="NCBI Taxonomy" id="224326"/>
    <lineage>
        <taxon>Bacteria</taxon>
        <taxon>Pseudomonadati</taxon>
        <taxon>Spirochaetota</taxon>
        <taxon>Spirochaetia</taxon>
        <taxon>Spirochaetales</taxon>
        <taxon>Borreliaceae</taxon>
        <taxon>Borreliella</taxon>
    </lineage>
</organism>
<proteinExistence type="inferred from homology"/>
<feature type="signal peptide" evidence="1">
    <location>
        <begin position="1"/>
        <end position="21"/>
    </location>
</feature>
<feature type="chain" id="PRO_0000013753" description="Uncharacterized lipoprotein BBF20">
    <location>
        <begin position="22"/>
        <end position="97"/>
    </location>
</feature>
<feature type="lipid moiety-binding region" description="N-palmitoyl cysteine" evidence="1">
    <location>
        <position position="22"/>
    </location>
</feature>
<feature type="lipid moiety-binding region" description="S-diacylglycerol cysteine" evidence="1">
    <location>
        <position position="22"/>
    </location>
</feature>
<sequence length="97" mass="11057">MNKKFSISLLSTILAFLLVLGCDLSSNNAENKMDDIFNLEKKYMDNSNYKCLSKNEAIVKNSKIKLGVNNTRSRSYSSRETNVSDSYNKTYSYCKSN</sequence>
<accession>O51025</accession>
<name>Y3020_BORBU</name>
<geneLocation type="plasmid">
    <name>lp28-1</name>
</geneLocation>
<dbReference type="EMBL" id="AE000794">
    <property type="protein sequence ID" value="AAC66376.2"/>
    <property type="status" value="ALT_INIT"/>
    <property type="molecule type" value="Genomic_DNA"/>
</dbReference>
<dbReference type="PIR" id="A70230">
    <property type="entry name" value="A70230"/>
</dbReference>
<dbReference type="RefSeq" id="NP_045453.2">
    <property type="nucleotide sequence ID" value="NC_001851.2"/>
</dbReference>
<dbReference type="RefSeq" id="WP_010258312.1">
    <property type="nucleotide sequence ID" value="NC_001851.2"/>
</dbReference>
<dbReference type="SMR" id="O51025"/>
<dbReference type="EnsemblBacteria" id="AAC66376">
    <property type="protein sequence ID" value="AAC66376"/>
    <property type="gene ID" value="BB_F20"/>
</dbReference>
<dbReference type="KEGG" id="bbu:BB_F20"/>
<dbReference type="PATRIC" id="fig|224326.49.peg.1310"/>
<dbReference type="HOGENOM" id="CLU_159799_0_0_12"/>
<dbReference type="OrthoDB" id="352862at2"/>
<dbReference type="PHI-base" id="PHI:6773"/>
<dbReference type="Proteomes" id="UP000001807">
    <property type="component" value="Plasmid lp28-1"/>
</dbReference>
<dbReference type="GO" id="GO:0005886">
    <property type="term" value="C:plasma membrane"/>
    <property type="evidence" value="ECO:0007669"/>
    <property type="project" value="UniProtKB-SubCell"/>
</dbReference>
<dbReference type="InterPro" id="IPR035340">
    <property type="entry name" value="DUF5425"/>
</dbReference>
<dbReference type="Pfam" id="PF17472">
    <property type="entry name" value="DUF5425"/>
    <property type="match status" value="1"/>
</dbReference>
<dbReference type="PROSITE" id="PS51257">
    <property type="entry name" value="PROKAR_LIPOPROTEIN"/>
    <property type="match status" value="1"/>
</dbReference>
<evidence type="ECO:0000255" key="1">
    <source>
        <dbReference type="PROSITE-ProRule" id="PRU00303"/>
    </source>
</evidence>
<evidence type="ECO:0000305" key="2"/>
<protein>
    <recommendedName>
        <fullName>Uncharacterized lipoprotein BBF20</fullName>
    </recommendedName>
</protein>